<dbReference type="EMBL" id="L77117">
    <property type="protein sequence ID" value="AAB98983.1"/>
    <property type="molecule type" value="Genomic_DNA"/>
</dbReference>
<dbReference type="PIR" id="D64422">
    <property type="entry name" value="D64422"/>
</dbReference>
<dbReference type="RefSeq" id="WP_010870494.1">
    <property type="nucleotide sequence ID" value="NC_000909.1"/>
</dbReference>
<dbReference type="SMR" id="P54059"/>
<dbReference type="FunCoup" id="P54059">
    <property type="interactions" value="158"/>
</dbReference>
<dbReference type="STRING" id="243232.MJ_0980"/>
<dbReference type="PaxDb" id="243232-MJ_0980"/>
<dbReference type="EnsemblBacteria" id="AAB98983">
    <property type="protein sequence ID" value="AAB98983"/>
    <property type="gene ID" value="MJ_0980"/>
</dbReference>
<dbReference type="GeneID" id="1451878"/>
<dbReference type="KEGG" id="mja:MJ_0980"/>
<dbReference type="eggNOG" id="arCOG04186">
    <property type="taxonomic scope" value="Archaea"/>
</dbReference>
<dbReference type="HOGENOM" id="CLU_062507_1_0_2"/>
<dbReference type="InParanoid" id="P54059"/>
<dbReference type="OrthoDB" id="30639at2157"/>
<dbReference type="PhylomeDB" id="P54059"/>
<dbReference type="Proteomes" id="UP000000805">
    <property type="component" value="Chromosome"/>
</dbReference>
<dbReference type="GO" id="GO:0005829">
    <property type="term" value="C:cytosol"/>
    <property type="evidence" value="ECO:0000318"/>
    <property type="project" value="GO_Central"/>
</dbReference>
<dbReference type="GO" id="GO:1990904">
    <property type="term" value="C:ribonucleoprotein complex"/>
    <property type="evidence" value="ECO:0007669"/>
    <property type="project" value="UniProtKB-KW"/>
</dbReference>
<dbReference type="GO" id="GO:0005840">
    <property type="term" value="C:ribosome"/>
    <property type="evidence" value="ECO:0007669"/>
    <property type="project" value="UniProtKB-KW"/>
</dbReference>
<dbReference type="GO" id="GO:0003735">
    <property type="term" value="F:structural constituent of ribosome"/>
    <property type="evidence" value="ECO:0007669"/>
    <property type="project" value="InterPro"/>
</dbReference>
<dbReference type="GO" id="GO:0006412">
    <property type="term" value="P:translation"/>
    <property type="evidence" value="ECO:0007669"/>
    <property type="project" value="UniProtKB-UniRule"/>
</dbReference>
<dbReference type="HAMAP" id="MF_00359">
    <property type="entry name" value="Ribosomal_eS1"/>
    <property type="match status" value="1"/>
</dbReference>
<dbReference type="InterPro" id="IPR001593">
    <property type="entry name" value="Ribosomal_eS1"/>
</dbReference>
<dbReference type="InterPro" id="IPR030838">
    <property type="entry name" value="Ribosomal_eS1_arc"/>
</dbReference>
<dbReference type="InterPro" id="IPR018281">
    <property type="entry name" value="Ribosomal_eS1_CS"/>
</dbReference>
<dbReference type="NCBIfam" id="NF003142">
    <property type="entry name" value="PRK04057.1"/>
    <property type="match status" value="1"/>
</dbReference>
<dbReference type="PANTHER" id="PTHR11830">
    <property type="entry name" value="40S RIBOSOMAL PROTEIN S3A"/>
    <property type="match status" value="1"/>
</dbReference>
<dbReference type="Pfam" id="PF01015">
    <property type="entry name" value="Ribosomal_S3Ae"/>
    <property type="match status" value="1"/>
</dbReference>
<dbReference type="SMART" id="SM01397">
    <property type="entry name" value="Ribosomal_S3Ae"/>
    <property type="match status" value="1"/>
</dbReference>
<dbReference type="PROSITE" id="PS01191">
    <property type="entry name" value="RIBOSOMAL_S3AE"/>
    <property type="match status" value="1"/>
</dbReference>
<gene>
    <name evidence="1" type="primary">rps3ae</name>
    <name type="ordered locus">MJ0980</name>
</gene>
<feature type="chain" id="PRO_0000153548" description="Small ribosomal subunit protein eS1">
    <location>
        <begin position="1"/>
        <end position="222"/>
    </location>
</feature>
<proteinExistence type="inferred from homology"/>
<reference key="1">
    <citation type="journal article" date="1996" name="Science">
        <title>Complete genome sequence of the methanogenic archaeon, Methanococcus jannaschii.</title>
        <authorList>
            <person name="Bult C.J."/>
            <person name="White O."/>
            <person name="Olsen G.J."/>
            <person name="Zhou L."/>
            <person name="Fleischmann R.D."/>
            <person name="Sutton G.G."/>
            <person name="Blake J.A."/>
            <person name="FitzGerald L.M."/>
            <person name="Clayton R.A."/>
            <person name="Gocayne J.D."/>
            <person name="Kerlavage A.R."/>
            <person name="Dougherty B.A."/>
            <person name="Tomb J.-F."/>
            <person name="Adams M.D."/>
            <person name="Reich C.I."/>
            <person name="Overbeek R."/>
            <person name="Kirkness E.F."/>
            <person name="Weinstock K.G."/>
            <person name="Merrick J.M."/>
            <person name="Glodek A."/>
            <person name="Scott J.L."/>
            <person name="Geoghagen N.S.M."/>
            <person name="Weidman J.F."/>
            <person name="Fuhrmann J.L."/>
            <person name="Nguyen D."/>
            <person name="Utterback T.R."/>
            <person name="Kelley J.M."/>
            <person name="Peterson J.D."/>
            <person name="Sadow P.W."/>
            <person name="Hanna M.C."/>
            <person name="Cotton M.D."/>
            <person name="Roberts K.M."/>
            <person name="Hurst M.A."/>
            <person name="Kaine B.P."/>
            <person name="Borodovsky M."/>
            <person name="Klenk H.-P."/>
            <person name="Fraser C.M."/>
            <person name="Smith H.O."/>
            <person name="Woese C.R."/>
            <person name="Venter J.C."/>
        </authorList>
    </citation>
    <scope>NUCLEOTIDE SEQUENCE [LARGE SCALE GENOMIC DNA]</scope>
    <source>
        <strain>ATCC 43067 / DSM 2661 / JAL-1 / JCM 10045 / NBRC 100440</strain>
    </source>
</reference>
<reference key="2">
    <citation type="submission" date="1998-02" db="EMBL/GenBank/DDBJ databases">
        <authorList>
            <person name="Bult C.J."/>
            <person name="White O."/>
            <person name="Olsen G.J."/>
            <person name="Zhou L."/>
            <person name="Fleischmann R.D."/>
            <person name="Sutton G.G."/>
            <person name="Blake J.A."/>
            <person name="FitzGerald L.M."/>
            <person name="Clayton R.A."/>
            <person name="Gocayne J.D."/>
            <person name="Kerlavage A.R."/>
            <person name="Dougherty B.A."/>
            <person name="Tomb J.-F."/>
            <person name="Adams M.D."/>
            <person name="Reich C.I."/>
            <person name="Overbeek R."/>
            <person name="Kirkness E.F."/>
            <person name="Weinstock K.G."/>
            <person name="Merrick J.M."/>
            <person name="Glodek A."/>
            <person name="Scott J.L."/>
            <person name="Geoghagen N.S.M."/>
            <person name="Weidman J.F."/>
            <person name="Fuhrmann J.L."/>
            <person name="Nguyen D."/>
            <person name="Utterback T.R."/>
            <person name="Kelley J.M."/>
            <person name="Peterson J.D."/>
            <person name="Sadow P.W."/>
            <person name="Hanna M.C."/>
            <person name="Cotton M.D."/>
            <person name="Roberts K.M."/>
            <person name="Hurst M.A."/>
            <person name="Kaine B.P."/>
            <person name="Borodovsky M."/>
            <person name="Klenk H.-P."/>
            <person name="Fraser C.M."/>
            <person name="Smith H.O."/>
            <person name="Woese C.R."/>
            <person name="Venter J.C."/>
        </authorList>
    </citation>
    <scope>SEQUENCE REVISION</scope>
</reference>
<evidence type="ECO:0000255" key="1">
    <source>
        <dbReference type="HAMAP-Rule" id="MF_00359"/>
    </source>
</evidence>
<evidence type="ECO:0000305" key="2"/>
<name>RS3A_METJA</name>
<sequence length="222" mass="25777">MATARTARSRRKVRKVRDKWKEKVWYEIYATPEFGGVFIGYTPANDPSLVLGRVAETSLRDLTGDPTKHMHRVYFKIFGVTGNKAIAQYYGHDTTREFMKSQIRRRRSRIDAILDVKTQDGHKIRTKAMVLTAYRANTKQKSDIRKKMEEIIKAMAKEKTFPQYVQAMLFGEMAEKIKNECKKIFPIKNVIIYKSEVLSLAKKEENEGFVKEAEEETAEAQE</sequence>
<keyword id="KW-1185">Reference proteome</keyword>
<keyword id="KW-0687">Ribonucleoprotein</keyword>
<keyword id="KW-0689">Ribosomal protein</keyword>
<organism>
    <name type="scientific">Methanocaldococcus jannaschii (strain ATCC 43067 / DSM 2661 / JAL-1 / JCM 10045 / NBRC 100440)</name>
    <name type="common">Methanococcus jannaschii</name>
    <dbReference type="NCBI Taxonomy" id="243232"/>
    <lineage>
        <taxon>Archaea</taxon>
        <taxon>Methanobacteriati</taxon>
        <taxon>Methanobacteriota</taxon>
        <taxon>Methanomada group</taxon>
        <taxon>Methanococci</taxon>
        <taxon>Methanococcales</taxon>
        <taxon>Methanocaldococcaceae</taxon>
        <taxon>Methanocaldococcus</taxon>
    </lineage>
</organism>
<comment type="similarity">
    <text evidence="1">Belongs to the eukaryotic ribosomal protein eS1 family.</text>
</comment>
<accession>P54059</accession>
<protein>
    <recommendedName>
        <fullName evidence="1">Small ribosomal subunit protein eS1</fullName>
    </recommendedName>
    <alternativeName>
        <fullName evidence="2">30S ribosomal protein S3Ae</fullName>
    </alternativeName>
    <alternativeName>
        <fullName evidence="1">Ribosomal protein S1e</fullName>
    </alternativeName>
</protein>